<keyword id="KW-0997">Cell inner membrane</keyword>
<keyword id="KW-1003">Cell membrane</keyword>
<keyword id="KW-0444">Lipid biosynthesis</keyword>
<keyword id="KW-0443">Lipid metabolism</keyword>
<keyword id="KW-0472">Membrane</keyword>
<keyword id="KW-0594">Phospholipid biosynthesis</keyword>
<keyword id="KW-1208">Phospholipid metabolism</keyword>
<keyword id="KW-0808">Transferase</keyword>
<keyword id="KW-0812">Transmembrane</keyword>
<keyword id="KW-1133">Transmembrane helix</keyword>
<evidence type="ECO:0000255" key="1">
    <source>
        <dbReference type="HAMAP-Rule" id="MF_01043"/>
    </source>
</evidence>
<gene>
    <name evidence="1" type="primary">plsY</name>
    <name type="ordered locus">jhp_1402</name>
</gene>
<dbReference type="EC" id="2.3.1.275" evidence="1"/>
<dbReference type="EMBL" id="AE001439">
    <property type="protein sequence ID" value="AAD06983.1"/>
    <property type="molecule type" value="Genomic_DNA"/>
</dbReference>
<dbReference type="PIR" id="B71811">
    <property type="entry name" value="B71811"/>
</dbReference>
<dbReference type="RefSeq" id="WP_001877123.1">
    <property type="nucleotide sequence ID" value="NZ_CP011330.1"/>
</dbReference>
<dbReference type="SMR" id="Q9ZJB1"/>
<dbReference type="KEGG" id="hpj:jhp_1402"/>
<dbReference type="PATRIC" id="fig|85963.30.peg.1149"/>
<dbReference type="eggNOG" id="COG0344">
    <property type="taxonomic scope" value="Bacteria"/>
</dbReference>
<dbReference type="UniPathway" id="UPA00085"/>
<dbReference type="Proteomes" id="UP000000804">
    <property type="component" value="Chromosome"/>
</dbReference>
<dbReference type="GO" id="GO:0005886">
    <property type="term" value="C:plasma membrane"/>
    <property type="evidence" value="ECO:0007669"/>
    <property type="project" value="UniProtKB-SubCell"/>
</dbReference>
<dbReference type="GO" id="GO:0043772">
    <property type="term" value="F:acyl-phosphate glycerol-3-phosphate acyltransferase activity"/>
    <property type="evidence" value="ECO:0007669"/>
    <property type="project" value="UniProtKB-UniRule"/>
</dbReference>
<dbReference type="GO" id="GO:0008654">
    <property type="term" value="P:phospholipid biosynthetic process"/>
    <property type="evidence" value="ECO:0007669"/>
    <property type="project" value="UniProtKB-UniRule"/>
</dbReference>
<dbReference type="HAMAP" id="MF_01043">
    <property type="entry name" value="PlsY"/>
    <property type="match status" value="1"/>
</dbReference>
<dbReference type="InterPro" id="IPR003811">
    <property type="entry name" value="G3P_acylTferase_PlsY"/>
</dbReference>
<dbReference type="NCBIfam" id="TIGR00023">
    <property type="entry name" value="glycerol-3-phosphate 1-O-acyltransferase PlsY"/>
    <property type="match status" value="1"/>
</dbReference>
<dbReference type="PANTHER" id="PTHR30309:SF0">
    <property type="entry name" value="GLYCEROL-3-PHOSPHATE ACYLTRANSFERASE-RELATED"/>
    <property type="match status" value="1"/>
</dbReference>
<dbReference type="PANTHER" id="PTHR30309">
    <property type="entry name" value="INNER MEMBRANE PROTEIN YGIH"/>
    <property type="match status" value="1"/>
</dbReference>
<dbReference type="Pfam" id="PF02660">
    <property type="entry name" value="G3P_acyltransf"/>
    <property type="match status" value="1"/>
</dbReference>
<dbReference type="SMART" id="SM01207">
    <property type="entry name" value="G3P_acyltransf"/>
    <property type="match status" value="1"/>
</dbReference>
<sequence length="220" mass="23804">MEGVLNFLTNINVIFTLLGYLIGGIPFGYALMKIFYGMDITKIGSGGIGATNVLRALQSKGVSNAKQMALLVLILDLFKGMFAVFLSKLFGLDYSLQWMVAIASILGHCYSPFLNFNGGKGVSTIMGSVVLLIPIESLIGLTVWFFVGKVLKISSLASILGVGTATVLIFFVPYMHIPDSVNILKEVGTQTPMVLIFIFTLIKHAGNIFNLLTGKEKKVL</sequence>
<proteinExistence type="inferred from homology"/>
<accession>Q9ZJB1</accession>
<organism>
    <name type="scientific">Helicobacter pylori (strain J99 / ATCC 700824)</name>
    <name type="common">Campylobacter pylori J99</name>
    <dbReference type="NCBI Taxonomy" id="85963"/>
    <lineage>
        <taxon>Bacteria</taxon>
        <taxon>Pseudomonadati</taxon>
        <taxon>Campylobacterota</taxon>
        <taxon>Epsilonproteobacteria</taxon>
        <taxon>Campylobacterales</taxon>
        <taxon>Helicobacteraceae</taxon>
        <taxon>Helicobacter</taxon>
    </lineage>
</organism>
<name>PLSY_HELPJ</name>
<feature type="chain" id="PRO_0000188382" description="Glycerol-3-phosphate acyltransferase">
    <location>
        <begin position="1"/>
        <end position="220"/>
    </location>
</feature>
<feature type="transmembrane region" description="Helical" evidence="1">
    <location>
        <begin position="11"/>
        <end position="31"/>
    </location>
</feature>
<feature type="transmembrane region" description="Helical" evidence="1">
    <location>
        <begin position="70"/>
        <end position="90"/>
    </location>
</feature>
<feature type="transmembrane region" description="Helical" evidence="1">
    <location>
        <begin position="96"/>
        <end position="116"/>
    </location>
</feature>
<feature type="transmembrane region" description="Helical" evidence="1">
    <location>
        <begin position="127"/>
        <end position="147"/>
    </location>
</feature>
<feature type="transmembrane region" description="Helical" evidence="1">
    <location>
        <begin position="153"/>
        <end position="173"/>
    </location>
</feature>
<feature type="transmembrane region" description="Helical" evidence="1">
    <location>
        <begin position="192"/>
        <end position="212"/>
    </location>
</feature>
<protein>
    <recommendedName>
        <fullName evidence="1">Glycerol-3-phosphate acyltransferase</fullName>
    </recommendedName>
    <alternativeName>
        <fullName evidence="1">Acyl-PO4 G3P acyltransferase</fullName>
    </alternativeName>
    <alternativeName>
        <fullName evidence="1">Acyl-phosphate--glycerol-3-phosphate acyltransferase</fullName>
    </alternativeName>
    <alternativeName>
        <fullName evidence="1">G3P acyltransferase</fullName>
        <shortName evidence="1">GPAT</shortName>
        <ecNumber evidence="1">2.3.1.275</ecNumber>
    </alternativeName>
    <alternativeName>
        <fullName evidence="1">Lysophosphatidic acid synthase</fullName>
        <shortName evidence="1">LPA synthase</shortName>
    </alternativeName>
</protein>
<comment type="function">
    <text evidence="1">Catalyzes the transfer of an acyl group from acyl-phosphate (acyl-PO(4)) to glycerol-3-phosphate (G3P) to form lysophosphatidic acid (LPA). This enzyme utilizes acyl-phosphate as fatty acyl donor, but not acyl-CoA or acyl-ACP.</text>
</comment>
<comment type="catalytic activity">
    <reaction evidence="1">
        <text>an acyl phosphate + sn-glycerol 3-phosphate = a 1-acyl-sn-glycero-3-phosphate + phosphate</text>
        <dbReference type="Rhea" id="RHEA:34075"/>
        <dbReference type="ChEBI" id="CHEBI:43474"/>
        <dbReference type="ChEBI" id="CHEBI:57597"/>
        <dbReference type="ChEBI" id="CHEBI:57970"/>
        <dbReference type="ChEBI" id="CHEBI:59918"/>
        <dbReference type="EC" id="2.3.1.275"/>
    </reaction>
</comment>
<comment type="pathway">
    <text evidence="1">Lipid metabolism; phospholipid metabolism.</text>
</comment>
<comment type="subunit">
    <text evidence="1">Probably interacts with PlsX.</text>
</comment>
<comment type="subcellular location">
    <subcellularLocation>
        <location evidence="1">Cell inner membrane</location>
        <topology evidence="1">Multi-pass membrane protein</topology>
    </subcellularLocation>
</comment>
<comment type="similarity">
    <text evidence="1">Belongs to the PlsY family.</text>
</comment>
<reference key="1">
    <citation type="journal article" date="1999" name="Nature">
        <title>Genomic sequence comparison of two unrelated isolates of the human gastric pathogen Helicobacter pylori.</title>
        <authorList>
            <person name="Alm R.A."/>
            <person name="Ling L.-S.L."/>
            <person name="Moir D.T."/>
            <person name="King B.L."/>
            <person name="Brown E.D."/>
            <person name="Doig P.C."/>
            <person name="Smith D.R."/>
            <person name="Noonan B."/>
            <person name="Guild B.C."/>
            <person name="deJonge B.L."/>
            <person name="Carmel G."/>
            <person name="Tummino P.J."/>
            <person name="Caruso A."/>
            <person name="Uria-Nickelsen M."/>
            <person name="Mills D.M."/>
            <person name="Ives C."/>
            <person name="Gibson R."/>
            <person name="Merberg D."/>
            <person name="Mills S.D."/>
            <person name="Jiang Q."/>
            <person name="Taylor D.E."/>
            <person name="Vovis G.F."/>
            <person name="Trust T.J."/>
        </authorList>
    </citation>
    <scope>NUCLEOTIDE SEQUENCE [LARGE SCALE GENOMIC DNA]</scope>
    <source>
        <strain>J99 / ATCC 700824</strain>
    </source>
</reference>